<protein>
    <recommendedName>
        <fullName evidence="1">Bifunctional protein FolD</fullName>
    </recommendedName>
    <domain>
        <recommendedName>
            <fullName evidence="1">Methylenetetrahydrofolate dehydrogenase</fullName>
            <ecNumber evidence="1">1.5.1.5</ecNumber>
        </recommendedName>
    </domain>
    <domain>
        <recommendedName>
            <fullName evidence="1">Methenyltetrahydrofolate cyclohydrolase</fullName>
            <ecNumber evidence="1">3.5.4.9</ecNumber>
        </recommendedName>
    </domain>
</protein>
<comment type="function">
    <text evidence="1">Catalyzes the oxidation of 5,10-methylenetetrahydrofolate to 5,10-methenyltetrahydrofolate and then the hydrolysis of 5,10-methenyltetrahydrofolate to 10-formyltetrahydrofolate.</text>
</comment>
<comment type="catalytic activity">
    <reaction evidence="1">
        <text>(6R)-5,10-methylene-5,6,7,8-tetrahydrofolate + NADP(+) = (6R)-5,10-methenyltetrahydrofolate + NADPH</text>
        <dbReference type="Rhea" id="RHEA:22812"/>
        <dbReference type="ChEBI" id="CHEBI:15636"/>
        <dbReference type="ChEBI" id="CHEBI:57455"/>
        <dbReference type="ChEBI" id="CHEBI:57783"/>
        <dbReference type="ChEBI" id="CHEBI:58349"/>
        <dbReference type="EC" id="1.5.1.5"/>
    </reaction>
</comment>
<comment type="catalytic activity">
    <reaction evidence="1">
        <text>(6R)-5,10-methenyltetrahydrofolate + H2O = (6R)-10-formyltetrahydrofolate + H(+)</text>
        <dbReference type="Rhea" id="RHEA:23700"/>
        <dbReference type="ChEBI" id="CHEBI:15377"/>
        <dbReference type="ChEBI" id="CHEBI:15378"/>
        <dbReference type="ChEBI" id="CHEBI:57455"/>
        <dbReference type="ChEBI" id="CHEBI:195366"/>
        <dbReference type="EC" id="3.5.4.9"/>
    </reaction>
</comment>
<comment type="pathway">
    <text evidence="1">One-carbon metabolism; tetrahydrofolate interconversion.</text>
</comment>
<comment type="subunit">
    <text evidence="1">Homodimer.</text>
</comment>
<comment type="similarity">
    <text evidence="1">Belongs to the tetrahydrofolate dehydrogenase/cyclohydrolase family.</text>
</comment>
<dbReference type="EC" id="1.5.1.5" evidence="1"/>
<dbReference type="EC" id="3.5.4.9" evidence="1"/>
<dbReference type="EMBL" id="AE008692">
    <property type="protein sequence ID" value="AAV89538.1"/>
    <property type="molecule type" value="Genomic_DNA"/>
</dbReference>
<dbReference type="RefSeq" id="WP_011240773.1">
    <property type="nucleotide sequence ID" value="NZ_CP035711.1"/>
</dbReference>
<dbReference type="SMR" id="Q5NP22"/>
<dbReference type="STRING" id="264203.ZMO0914"/>
<dbReference type="KEGG" id="zmo:ZMO0914"/>
<dbReference type="eggNOG" id="COG0190">
    <property type="taxonomic scope" value="Bacteria"/>
</dbReference>
<dbReference type="HOGENOM" id="CLU_034045_1_2_5"/>
<dbReference type="UniPathway" id="UPA00193"/>
<dbReference type="Proteomes" id="UP000001173">
    <property type="component" value="Chromosome"/>
</dbReference>
<dbReference type="GO" id="GO:0005829">
    <property type="term" value="C:cytosol"/>
    <property type="evidence" value="ECO:0007669"/>
    <property type="project" value="TreeGrafter"/>
</dbReference>
<dbReference type="GO" id="GO:0004477">
    <property type="term" value="F:methenyltetrahydrofolate cyclohydrolase activity"/>
    <property type="evidence" value="ECO:0007669"/>
    <property type="project" value="UniProtKB-UniRule"/>
</dbReference>
<dbReference type="GO" id="GO:0004488">
    <property type="term" value="F:methylenetetrahydrofolate dehydrogenase (NADP+) activity"/>
    <property type="evidence" value="ECO:0007669"/>
    <property type="project" value="UniProtKB-UniRule"/>
</dbReference>
<dbReference type="GO" id="GO:0000105">
    <property type="term" value="P:L-histidine biosynthetic process"/>
    <property type="evidence" value="ECO:0007669"/>
    <property type="project" value="UniProtKB-KW"/>
</dbReference>
<dbReference type="GO" id="GO:0009086">
    <property type="term" value="P:methionine biosynthetic process"/>
    <property type="evidence" value="ECO:0007669"/>
    <property type="project" value="UniProtKB-KW"/>
</dbReference>
<dbReference type="GO" id="GO:0006164">
    <property type="term" value="P:purine nucleotide biosynthetic process"/>
    <property type="evidence" value="ECO:0007669"/>
    <property type="project" value="UniProtKB-KW"/>
</dbReference>
<dbReference type="GO" id="GO:0035999">
    <property type="term" value="P:tetrahydrofolate interconversion"/>
    <property type="evidence" value="ECO:0007669"/>
    <property type="project" value="UniProtKB-UniRule"/>
</dbReference>
<dbReference type="CDD" id="cd01080">
    <property type="entry name" value="NAD_bind_m-THF_DH_Cyclohyd"/>
    <property type="match status" value="1"/>
</dbReference>
<dbReference type="FunFam" id="3.40.50.720:FF:000006">
    <property type="entry name" value="Bifunctional protein FolD"/>
    <property type="match status" value="1"/>
</dbReference>
<dbReference type="FunFam" id="3.40.50.10860:FF:000005">
    <property type="entry name" value="C-1-tetrahydrofolate synthase, cytoplasmic, putative"/>
    <property type="match status" value="1"/>
</dbReference>
<dbReference type="Gene3D" id="3.40.50.10860">
    <property type="entry name" value="Leucine Dehydrogenase, chain A, domain 1"/>
    <property type="match status" value="1"/>
</dbReference>
<dbReference type="Gene3D" id="3.40.50.720">
    <property type="entry name" value="NAD(P)-binding Rossmann-like Domain"/>
    <property type="match status" value="1"/>
</dbReference>
<dbReference type="HAMAP" id="MF_01576">
    <property type="entry name" value="THF_DHG_CYH"/>
    <property type="match status" value="1"/>
</dbReference>
<dbReference type="InterPro" id="IPR046346">
    <property type="entry name" value="Aminoacid_DH-like_N_sf"/>
</dbReference>
<dbReference type="InterPro" id="IPR036291">
    <property type="entry name" value="NAD(P)-bd_dom_sf"/>
</dbReference>
<dbReference type="InterPro" id="IPR000672">
    <property type="entry name" value="THF_DH/CycHdrlase"/>
</dbReference>
<dbReference type="InterPro" id="IPR020630">
    <property type="entry name" value="THF_DH/CycHdrlase_cat_dom"/>
</dbReference>
<dbReference type="InterPro" id="IPR020867">
    <property type="entry name" value="THF_DH/CycHdrlase_CS"/>
</dbReference>
<dbReference type="InterPro" id="IPR020631">
    <property type="entry name" value="THF_DH/CycHdrlase_NAD-bd_dom"/>
</dbReference>
<dbReference type="NCBIfam" id="NF008058">
    <property type="entry name" value="PRK10792.1"/>
    <property type="match status" value="1"/>
</dbReference>
<dbReference type="NCBIfam" id="NF010783">
    <property type="entry name" value="PRK14186.1"/>
    <property type="match status" value="1"/>
</dbReference>
<dbReference type="NCBIfam" id="NF010785">
    <property type="entry name" value="PRK14188.1"/>
    <property type="match status" value="1"/>
</dbReference>
<dbReference type="PANTHER" id="PTHR48099:SF5">
    <property type="entry name" value="C-1-TETRAHYDROFOLATE SYNTHASE, CYTOPLASMIC"/>
    <property type="match status" value="1"/>
</dbReference>
<dbReference type="PANTHER" id="PTHR48099">
    <property type="entry name" value="C-1-TETRAHYDROFOLATE SYNTHASE, CYTOPLASMIC-RELATED"/>
    <property type="match status" value="1"/>
</dbReference>
<dbReference type="Pfam" id="PF00763">
    <property type="entry name" value="THF_DHG_CYH"/>
    <property type="match status" value="1"/>
</dbReference>
<dbReference type="Pfam" id="PF02882">
    <property type="entry name" value="THF_DHG_CYH_C"/>
    <property type="match status" value="1"/>
</dbReference>
<dbReference type="PRINTS" id="PR00085">
    <property type="entry name" value="THFDHDRGNASE"/>
</dbReference>
<dbReference type="SUPFAM" id="SSF53223">
    <property type="entry name" value="Aminoacid dehydrogenase-like, N-terminal domain"/>
    <property type="match status" value="1"/>
</dbReference>
<dbReference type="SUPFAM" id="SSF51735">
    <property type="entry name" value="NAD(P)-binding Rossmann-fold domains"/>
    <property type="match status" value="1"/>
</dbReference>
<dbReference type="PROSITE" id="PS00766">
    <property type="entry name" value="THF_DHG_CYH_1"/>
    <property type="match status" value="1"/>
</dbReference>
<dbReference type="PROSITE" id="PS00767">
    <property type="entry name" value="THF_DHG_CYH_2"/>
    <property type="match status" value="1"/>
</dbReference>
<sequence>MTEAIIIDGKEFSSNLRNKIAEDVKAFKKERNVVPGLAVVLVGEDPASRIYVRKKEEMTTAVGMNSLSYRLDANASQQELLDLIETLNHDPAVHGILVQLPLPKHIDTPTILEAIDPDKDVDGFHVVNAGRLAIGTPSLVPCTPAGCMMLLEHSLGSLKGKNALVIGRSTIVGRPMAQLLLAADCTVTVAHRHTKNLEELCRQADIVVAAVGIPHFVKASWLKPGAVVIDVGINRVPAEDEAAKAAGKTRIVGDVDFVEAAKVASAITPVPGGVGPMTIACLLNNTVQAARNLTSAS</sequence>
<gene>
    <name evidence="1" type="primary">folD</name>
    <name type="ordered locus">ZMO0914</name>
</gene>
<accession>Q5NP22</accession>
<keyword id="KW-0028">Amino-acid biosynthesis</keyword>
<keyword id="KW-0368">Histidine biosynthesis</keyword>
<keyword id="KW-0378">Hydrolase</keyword>
<keyword id="KW-0486">Methionine biosynthesis</keyword>
<keyword id="KW-0511">Multifunctional enzyme</keyword>
<keyword id="KW-0521">NADP</keyword>
<keyword id="KW-0554">One-carbon metabolism</keyword>
<keyword id="KW-0560">Oxidoreductase</keyword>
<keyword id="KW-0658">Purine biosynthesis</keyword>
<keyword id="KW-1185">Reference proteome</keyword>
<organism>
    <name type="scientific">Zymomonas mobilis subsp. mobilis (strain ATCC 31821 / ZM4 / CP4)</name>
    <dbReference type="NCBI Taxonomy" id="264203"/>
    <lineage>
        <taxon>Bacteria</taxon>
        <taxon>Pseudomonadati</taxon>
        <taxon>Pseudomonadota</taxon>
        <taxon>Alphaproteobacteria</taxon>
        <taxon>Sphingomonadales</taxon>
        <taxon>Zymomonadaceae</taxon>
        <taxon>Zymomonas</taxon>
    </lineage>
</organism>
<reference key="1">
    <citation type="journal article" date="2005" name="Nat. Biotechnol.">
        <title>The genome sequence of the ethanologenic bacterium Zymomonas mobilis ZM4.</title>
        <authorList>
            <person name="Seo J.-S."/>
            <person name="Chong H."/>
            <person name="Park H.S."/>
            <person name="Yoon K.-O."/>
            <person name="Jung C."/>
            <person name="Kim J.J."/>
            <person name="Hong J.H."/>
            <person name="Kim H."/>
            <person name="Kim J.-H."/>
            <person name="Kil J.-I."/>
            <person name="Park C.J."/>
            <person name="Oh H.-M."/>
            <person name="Lee J.-S."/>
            <person name="Jin S.-J."/>
            <person name="Um H.-W."/>
            <person name="Lee H.-J."/>
            <person name="Oh S.-J."/>
            <person name="Kim J.Y."/>
            <person name="Kang H.L."/>
            <person name="Lee S.Y."/>
            <person name="Lee K.J."/>
            <person name="Kang H.S."/>
        </authorList>
    </citation>
    <scope>NUCLEOTIDE SEQUENCE [LARGE SCALE GENOMIC DNA]</scope>
    <source>
        <strain>ATCC 31821 / ZM4 / CP4</strain>
    </source>
</reference>
<name>FOLD_ZYMMO</name>
<evidence type="ECO:0000255" key="1">
    <source>
        <dbReference type="HAMAP-Rule" id="MF_01576"/>
    </source>
</evidence>
<feature type="chain" id="PRO_0000268577" description="Bifunctional protein FolD">
    <location>
        <begin position="1"/>
        <end position="297"/>
    </location>
</feature>
<feature type="binding site" evidence="1">
    <location>
        <begin position="167"/>
        <end position="169"/>
    </location>
    <ligand>
        <name>NADP(+)</name>
        <dbReference type="ChEBI" id="CHEBI:58349"/>
    </ligand>
</feature>
<feature type="binding site" evidence="1">
    <location>
        <position position="233"/>
    </location>
    <ligand>
        <name>NADP(+)</name>
        <dbReference type="ChEBI" id="CHEBI:58349"/>
    </ligand>
</feature>
<proteinExistence type="inferred from homology"/>